<evidence type="ECO:0000255" key="1">
    <source>
        <dbReference type="HAMAP-Rule" id="MF_00452"/>
    </source>
</evidence>
<reference key="1">
    <citation type="journal article" date="1999" name="Nat. Genet.">
        <title>Comparative genomes of Chlamydia pneumoniae and C. trachomatis.</title>
        <authorList>
            <person name="Kalman S."/>
            <person name="Mitchell W.P."/>
            <person name="Marathe R."/>
            <person name="Lammel C.J."/>
            <person name="Fan J."/>
            <person name="Hyman R.W."/>
            <person name="Olinger L."/>
            <person name="Grimwood J."/>
            <person name="Davis R.W."/>
            <person name="Stephens R.S."/>
        </authorList>
    </citation>
    <scope>NUCLEOTIDE SEQUENCE [LARGE SCALE GENOMIC DNA]</scope>
    <source>
        <strain>CWL029</strain>
    </source>
</reference>
<reference key="2">
    <citation type="journal article" date="2000" name="Nucleic Acids Res.">
        <title>Genome sequences of Chlamydia trachomatis MoPn and Chlamydia pneumoniae AR39.</title>
        <authorList>
            <person name="Read T.D."/>
            <person name="Brunham R.C."/>
            <person name="Shen C."/>
            <person name="Gill S.R."/>
            <person name="Heidelberg J.F."/>
            <person name="White O."/>
            <person name="Hickey E.K."/>
            <person name="Peterson J.D."/>
            <person name="Utterback T.R."/>
            <person name="Berry K.J."/>
            <person name="Bass S."/>
            <person name="Linher K.D."/>
            <person name="Weidman J.F."/>
            <person name="Khouri H.M."/>
            <person name="Craven B."/>
            <person name="Bowman C."/>
            <person name="Dodson R.J."/>
            <person name="Gwinn M.L."/>
            <person name="Nelson W.C."/>
            <person name="DeBoy R.T."/>
            <person name="Kolonay J.F."/>
            <person name="McClarty G."/>
            <person name="Salzberg S.L."/>
            <person name="Eisen J.A."/>
            <person name="Fraser C.M."/>
        </authorList>
    </citation>
    <scope>NUCLEOTIDE SEQUENCE [LARGE SCALE GENOMIC DNA]</scope>
    <source>
        <strain>AR39</strain>
    </source>
</reference>
<reference key="3">
    <citation type="journal article" date="2000" name="Nucleic Acids Res.">
        <title>Comparison of whole genome sequences of Chlamydia pneumoniae J138 from Japan and CWL029 from USA.</title>
        <authorList>
            <person name="Shirai M."/>
            <person name="Hirakawa H."/>
            <person name="Kimoto M."/>
            <person name="Tabuchi M."/>
            <person name="Kishi F."/>
            <person name="Ouchi K."/>
            <person name="Shiba T."/>
            <person name="Ishii K."/>
            <person name="Hattori M."/>
            <person name="Kuhara S."/>
            <person name="Nakazawa T."/>
        </authorList>
    </citation>
    <scope>NUCLEOTIDE SEQUENCE [LARGE SCALE GENOMIC DNA]</scope>
    <source>
        <strain>J138</strain>
    </source>
</reference>
<reference key="4">
    <citation type="submission" date="2002-05" db="EMBL/GenBank/DDBJ databases">
        <title>The genome sequence of Chlamydia pneumoniae TW183 and comparison with other Chlamydia strains based on whole genome sequence analysis.</title>
        <authorList>
            <person name="Geng M.M."/>
            <person name="Schuhmacher A."/>
            <person name="Muehldorfer I."/>
            <person name="Bensch K.W."/>
            <person name="Schaefer K.P."/>
            <person name="Schneider S."/>
            <person name="Pohl T."/>
            <person name="Essig A."/>
            <person name="Marre R."/>
            <person name="Melchers K."/>
        </authorList>
    </citation>
    <scope>NUCLEOTIDE SEQUENCE [LARGE SCALE GENOMIC DNA]</scope>
    <source>
        <strain>TW-183</strain>
    </source>
</reference>
<name>PCKG_CHLPN</name>
<gene>
    <name evidence="1" type="primary">pckG</name>
    <name type="ordered locus">CPn_0851</name>
    <name type="ordered locus">CP_1018</name>
    <name type="ordered locus">CpB0880</name>
</gene>
<comment type="function">
    <text evidence="1">Catalyzes the conversion of oxaloacetate (OAA) to phosphoenolpyruvate (PEP), the rate-limiting step in the metabolic pathway that produces glucose from lactate and other precursors derived from the citric acid cycle.</text>
</comment>
<comment type="catalytic activity">
    <reaction evidence="1">
        <text>oxaloacetate + GTP = phosphoenolpyruvate + GDP + CO2</text>
        <dbReference type="Rhea" id="RHEA:10388"/>
        <dbReference type="ChEBI" id="CHEBI:16452"/>
        <dbReference type="ChEBI" id="CHEBI:16526"/>
        <dbReference type="ChEBI" id="CHEBI:37565"/>
        <dbReference type="ChEBI" id="CHEBI:58189"/>
        <dbReference type="ChEBI" id="CHEBI:58702"/>
        <dbReference type="EC" id="4.1.1.32"/>
    </reaction>
</comment>
<comment type="cofactor">
    <cofactor evidence="1">
        <name>Mn(2+)</name>
        <dbReference type="ChEBI" id="CHEBI:29035"/>
    </cofactor>
    <text evidence="1">Binds 1 Mn(2+) ion per subunit.</text>
</comment>
<comment type="pathway">
    <text evidence="1">Carbohydrate biosynthesis; gluconeogenesis.</text>
</comment>
<comment type="subunit">
    <text evidence="1">Monomer.</text>
</comment>
<comment type="subcellular location">
    <subcellularLocation>
        <location evidence="1">Cytoplasm</location>
    </subcellularLocation>
</comment>
<comment type="similarity">
    <text evidence="1">Belongs to the phosphoenolpyruvate carboxykinase [GTP] family.</text>
</comment>
<dbReference type="EC" id="4.1.1.32" evidence="1"/>
<dbReference type="EMBL" id="AE001363">
    <property type="protein sequence ID" value="AAD18989.1"/>
    <property type="molecule type" value="Genomic_DNA"/>
</dbReference>
<dbReference type="EMBL" id="AE002161">
    <property type="protein sequence ID" value="AAF73723.1"/>
    <property type="molecule type" value="Genomic_DNA"/>
</dbReference>
<dbReference type="EMBL" id="BA000008">
    <property type="protein sequence ID" value="BAA99059.1"/>
    <property type="molecule type" value="Genomic_DNA"/>
</dbReference>
<dbReference type="EMBL" id="AE009440">
    <property type="protein sequence ID" value="AAP98809.1"/>
    <property type="molecule type" value="Genomic_DNA"/>
</dbReference>
<dbReference type="PIR" id="A86597">
    <property type="entry name" value="A86597"/>
</dbReference>
<dbReference type="PIR" id="E72027">
    <property type="entry name" value="E72027"/>
</dbReference>
<dbReference type="RefSeq" id="NP_225046.1">
    <property type="nucleotide sequence ID" value="NC_000922.1"/>
</dbReference>
<dbReference type="RefSeq" id="WP_010883486.1">
    <property type="nucleotide sequence ID" value="NZ_CP173416.1"/>
</dbReference>
<dbReference type="SMR" id="Q9Z755"/>
<dbReference type="STRING" id="406984.CPK_ORF00257"/>
<dbReference type="KEGG" id="cpa:CP_1018"/>
<dbReference type="KEGG" id="cpj:pckA"/>
<dbReference type="KEGG" id="cpn:CPn_0851"/>
<dbReference type="KEGG" id="cpt:CpB0880"/>
<dbReference type="PATRIC" id="fig|115713.3.peg.931"/>
<dbReference type="eggNOG" id="COG1274">
    <property type="taxonomic scope" value="Bacteria"/>
</dbReference>
<dbReference type="HOGENOM" id="CLU_028872_1_1_0"/>
<dbReference type="OrthoDB" id="9758871at2"/>
<dbReference type="UniPathway" id="UPA00138"/>
<dbReference type="Proteomes" id="UP000000583">
    <property type="component" value="Chromosome"/>
</dbReference>
<dbReference type="Proteomes" id="UP000000801">
    <property type="component" value="Chromosome"/>
</dbReference>
<dbReference type="GO" id="GO:0005829">
    <property type="term" value="C:cytosol"/>
    <property type="evidence" value="ECO:0007669"/>
    <property type="project" value="TreeGrafter"/>
</dbReference>
<dbReference type="GO" id="GO:0005525">
    <property type="term" value="F:GTP binding"/>
    <property type="evidence" value="ECO:0007669"/>
    <property type="project" value="UniProtKB-UniRule"/>
</dbReference>
<dbReference type="GO" id="GO:0030145">
    <property type="term" value="F:manganese ion binding"/>
    <property type="evidence" value="ECO:0007669"/>
    <property type="project" value="UniProtKB-UniRule"/>
</dbReference>
<dbReference type="GO" id="GO:0004613">
    <property type="term" value="F:phosphoenolpyruvate carboxykinase (GTP) activity"/>
    <property type="evidence" value="ECO:0007669"/>
    <property type="project" value="UniProtKB-UniRule"/>
</dbReference>
<dbReference type="GO" id="GO:0071333">
    <property type="term" value="P:cellular response to glucose stimulus"/>
    <property type="evidence" value="ECO:0007669"/>
    <property type="project" value="TreeGrafter"/>
</dbReference>
<dbReference type="GO" id="GO:0006094">
    <property type="term" value="P:gluconeogenesis"/>
    <property type="evidence" value="ECO:0007669"/>
    <property type="project" value="UniProtKB-UniRule"/>
</dbReference>
<dbReference type="GO" id="GO:0046327">
    <property type="term" value="P:glycerol biosynthetic process from pyruvate"/>
    <property type="evidence" value="ECO:0007669"/>
    <property type="project" value="TreeGrafter"/>
</dbReference>
<dbReference type="GO" id="GO:0006107">
    <property type="term" value="P:oxaloacetate metabolic process"/>
    <property type="evidence" value="ECO:0007669"/>
    <property type="project" value="TreeGrafter"/>
</dbReference>
<dbReference type="GO" id="GO:0019543">
    <property type="term" value="P:propionate catabolic process"/>
    <property type="evidence" value="ECO:0007669"/>
    <property type="project" value="TreeGrafter"/>
</dbReference>
<dbReference type="GO" id="GO:0033993">
    <property type="term" value="P:response to lipid"/>
    <property type="evidence" value="ECO:0007669"/>
    <property type="project" value="TreeGrafter"/>
</dbReference>
<dbReference type="GO" id="GO:0042594">
    <property type="term" value="P:response to starvation"/>
    <property type="evidence" value="ECO:0007669"/>
    <property type="project" value="TreeGrafter"/>
</dbReference>
<dbReference type="CDD" id="cd00819">
    <property type="entry name" value="PEPCK_GTP"/>
    <property type="match status" value="1"/>
</dbReference>
<dbReference type="FunFam" id="3.40.449.10:FF:000005">
    <property type="entry name" value="Phosphoenolpyruvate carboxykinase [GTP]"/>
    <property type="match status" value="1"/>
</dbReference>
<dbReference type="Gene3D" id="3.90.228.20">
    <property type="match status" value="1"/>
</dbReference>
<dbReference type="Gene3D" id="3.40.449.10">
    <property type="entry name" value="Phosphoenolpyruvate Carboxykinase, domain 1"/>
    <property type="match status" value="1"/>
</dbReference>
<dbReference type="Gene3D" id="2.170.8.10">
    <property type="entry name" value="Phosphoenolpyruvate Carboxykinase, domain 2"/>
    <property type="match status" value="1"/>
</dbReference>
<dbReference type="HAMAP" id="MF_00452">
    <property type="entry name" value="PEPCK_GTP"/>
    <property type="match status" value="1"/>
</dbReference>
<dbReference type="InterPro" id="IPR018091">
    <property type="entry name" value="PEP_carboxykin_GTP_CS"/>
</dbReference>
<dbReference type="InterPro" id="IPR013035">
    <property type="entry name" value="PEP_carboxykinase_C"/>
</dbReference>
<dbReference type="InterPro" id="IPR008209">
    <property type="entry name" value="PEP_carboxykinase_GTP"/>
</dbReference>
<dbReference type="InterPro" id="IPR035077">
    <property type="entry name" value="PEP_carboxykinase_GTP_C"/>
</dbReference>
<dbReference type="InterPro" id="IPR035078">
    <property type="entry name" value="PEP_carboxykinase_GTP_N"/>
</dbReference>
<dbReference type="InterPro" id="IPR008210">
    <property type="entry name" value="PEP_carboxykinase_N"/>
</dbReference>
<dbReference type="NCBIfam" id="NF003253">
    <property type="entry name" value="PRK04210.1"/>
    <property type="match status" value="1"/>
</dbReference>
<dbReference type="PANTHER" id="PTHR11561">
    <property type="entry name" value="PHOSPHOENOLPYRUVATE CARBOXYKINASE"/>
    <property type="match status" value="1"/>
</dbReference>
<dbReference type="PANTHER" id="PTHR11561:SF0">
    <property type="entry name" value="PHOSPHOENOLPYRUVATE CARBOXYKINASE [GTP]-RELATED"/>
    <property type="match status" value="1"/>
</dbReference>
<dbReference type="Pfam" id="PF00821">
    <property type="entry name" value="PEPCK_GTP"/>
    <property type="match status" value="1"/>
</dbReference>
<dbReference type="Pfam" id="PF17297">
    <property type="entry name" value="PEPCK_N"/>
    <property type="match status" value="1"/>
</dbReference>
<dbReference type="PIRSF" id="PIRSF001348">
    <property type="entry name" value="PEP_carboxykinase_GTP"/>
    <property type="match status" value="1"/>
</dbReference>
<dbReference type="SUPFAM" id="SSF68923">
    <property type="entry name" value="PEP carboxykinase N-terminal domain"/>
    <property type="match status" value="1"/>
</dbReference>
<dbReference type="SUPFAM" id="SSF53795">
    <property type="entry name" value="PEP carboxykinase-like"/>
    <property type="match status" value="1"/>
</dbReference>
<dbReference type="PROSITE" id="PS00505">
    <property type="entry name" value="PEPCK_GTP"/>
    <property type="match status" value="1"/>
</dbReference>
<keyword id="KW-0963">Cytoplasm</keyword>
<keyword id="KW-0210">Decarboxylase</keyword>
<keyword id="KW-0312">Gluconeogenesis</keyword>
<keyword id="KW-0342">GTP-binding</keyword>
<keyword id="KW-0456">Lyase</keyword>
<keyword id="KW-0464">Manganese</keyword>
<keyword id="KW-0479">Metal-binding</keyword>
<keyword id="KW-0547">Nucleotide-binding</keyword>
<organism>
    <name type="scientific">Chlamydia pneumoniae</name>
    <name type="common">Chlamydophila pneumoniae</name>
    <dbReference type="NCBI Taxonomy" id="83558"/>
    <lineage>
        <taxon>Bacteria</taxon>
        <taxon>Pseudomonadati</taxon>
        <taxon>Chlamydiota</taxon>
        <taxon>Chlamydiia</taxon>
        <taxon>Chlamydiales</taxon>
        <taxon>Chlamydiaceae</taxon>
        <taxon>Chlamydia/Chlamydophila group</taxon>
        <taxon>Chlamydia</taxon>
    </lineage>
</organism>
<protein>
    <recommendedName>
        <fullName evidence="1">Phosphoenolpyruvate carboxykinase [GTP]</fullName>
        <shortName evidence="1">PEP carboxykinase</shortName>
        <shortName evidence="1">PEPCK</shortName>
        <ecNumber evidence="1">4.1.1.32</ecNumber>
    </recommendedName>
</protein>
<accession>Q9Z755</accession>
<feature type="chain" id="PRO_0000103598" description="Phosphoenolpyruvate carboxykinase [GTP]">
    <location>
        <begin position="1"/>
        <end position="600"/>
    </location>
</feature>
<feature type="active site" evidence="1">
    <location>
        <position position="267"/>
    </location>
</feature>
<feature type="binding site" evidence="1">
    <location>
        <position position="74"/>
    </location>
    <ligand>
        <name>substrate</name>
    </ligand>
</feature>
<feature type="binding site" evidence="1">
    <location>
        <begin position="214"/>
        <end position="216"/>
    </location>
    <ligand>
        <name>substrate</name>
    </ligand>
</feature>
<feature type="binding site" evidence="1">
    <location>
        <position position="223"/>
    </location>
    <ligand>
        <name>Mn(2+)</name>
        <dbReference type="ChEBI" id="CHEBI:29035"/>
    </ligand>
</feature>
<feature type="binding site" evidence="1">
    <location>
        <position position="243"/>
    </location>
    <ligand>
        <name>Mn(2+)</name>
        <dbReference type="ChEBI" id="CHEBI:29035"/>
    </ligand>
</feature>
<feature type="binding site" evidence="1">
    <location>
        <position position="265"/>
    </location>
    <ligand>
        <name>substrate</name>
    </ligand>
</feature>
<feature type="binding site" evidence="1">
    <location>
        <begin position="266"/>
        <end position="271"/>
    </location>
    <ligand>
        <name>GTP</name>
        <dbReference type="ChEBI" id="CHEBI:37565"/>
    </ligand>
</feature>
<feature type="binding site" evidence="1">
    <location>
        <position position="290"/>
    </location>
    <ligand>
        <name>Mn(2+)</name>
        <dbReference type="ChEBI" id="CHEBI:29035"/>
    </ligand>
</feature>
<feature type="binding site" evidence="1">
    <location>
        <begin position="379"/>
        <end position="381"/>
    </location>
    <ligand>
        <name>substrate</name>
    </ligand>
</feature>
<feature type="binding site" evidence="1">
    <location>
        <position position="381"/>
    </location>
    <ligand>
        <name>GTP</name>
        <dbReference type="ChEBI" id="CHEBI:37565"/>
    </ligand>
</feature>
<feature type="binding site" evidence="1">
    <location>
        <position position="412"/>
    </location>
    <ligand>
        <name>GTP</name>
        <dbReference type="ChEBI" id="CHEBI:37565"/>
    </ligand>
</feature>
<feature type="binding site" evidence="1">
    <location>
        <begin position="506"/>
        <end position="509"/>
    </location>
    <ligand>
        <name>GTP</name>
        <dbReference type="ChEBI" id="CHEBI:37565"/>
    </ligand>
</feature>
<sequence>MVWSTNIKHEGLKSWIDEVAKLTTPKDIRLCDGSDTEYDELCTLMESTGTMIRLNPEFHPNCFLVRSSADDVARVEQFTFICTSTEAEAGPTNNWRDPQEMRRELHQLFRGCMQGRTLYIVPFCMGPLDSPFSIVGVELTDSPYVVCSMKIMTRMGDDVLRSLGTSGKFLKCLHSVGKPLSPGEADVSWPCNPKSMRIVHFQDDSSVMSFGSGYGGNALLGKKCVALRLASYMAKSQGWLAEHMLIIGITNPEGKKKYFSASFPSACGKTNLAMLMPKLPGWKIECIGDDIAWIRPGRDGRLYAVNPEYGFFGVAPGTSERTNPNALATCRSNSIFTNVALTADGDVWWEGLTEQPPEPLTDWLGKPWKPGGSPAAHPNSRFTAPLRQCPSLDPEWNSPQGVPLDAIIFGGRRSETIPLVYEALSWEHGVTIGAGMSSTTTAAIVGQLGKLRHDPFAMLPFCGYNMAYYFQHWLSFAENRSLKLPKIFGVNWFRKNNQGEFLWPGFSENLRVLEWIFQRTDGLEDIAERTPIGYLPNIQKFNLNGLNLDLQTVQELFSVDAEGWLAEVENIGEYLKIFGSDCPQQITDELLRIKSELKEK</sequence>
<proteinExistence type="inferred from homology"/>